<reference key="1">
    <citation type="journal article" date="1995" name="DNA Res.">
        <title>Cloning and sequencing of a 23-kb region of the Bacillus subtilis genome between the iol and hut operons.</title>
        <authorList>
            <person name="Yoshida K."/>
            <person name="Fujimyra M."/>
            <person name="Yanai N."/>
            <person name="Fujita Y."/>
        </authorList>
    </citation>
    <scope>NUCLEOTIDE SEQUENCE [GENOMIC DNA]</scope>
    <source>
        <strain>168 / BGSC1A1</strain>
    </source>
</reference>
<reference key="2">
    <citation type="journal article" date="1997" name="Nature">
        <title>The complete genome sequence of the Gram-positive bacterium Bacillus subtilis.</title>
        <authorList>
            <person name="Kunst F."/>
            <person name="Ogasawara N."/>
            <person name="Moszer I."/>
            <person name="Albertini A.M."/>
            <person name="Alloni G."/>
            <person name="Azevedo V."/>
            <person name="Bertero M.G."/>
            <person name="Bessieres P."/>
            <person name="Bolotin A."/>
            <person name="Borchert S."/>
            <person name="Borriss R."/>
            <person name="Boursier L."/>
            <person name="Brans A."/>
            <person name="Braun M."/>
            <person name="Brignell S.C."/>
            <person name="Bron S."/>
            <person name="Brouillet S."/>
            <person name="Bruschi C.V."/>
            <person name="Caldwell B."/>
            <person name="Capuano V."/>
            <person name="Carter N.M."/>
            <person name="Choi S.-K."/>
            <person name="Codani J.-J."/>
            <person name="Connerton I.F."/>
            <person name="Cummings N.J."/>
            <person name="Daniel R.A."/>
            <person name="Denizot F."/>
            <person name="Devine K.M."/>
            <person name="Duesterhoeft A."/>
            <person name="Ehrlich S.D."/>
            <person name="Emmerson P.T."/>
            <person name="Entian K.-D."/>
            <person name="Errington J."/>
            <person name="Fabret C."/>
            <person name="Ferrari E."/>
            <person name="Foulger D."/>
            <person name="Fritz C."/>
            <person name="Fujita M."/>
            <person name="Fujita Y."/>
            <person name="Fuma S."/>
            <person name="Galizzi A."/>
            <person name="Galleron N."/>
            <person name="Ghim S.-Y."/>
            <person name="Glaser P."/>
            <person name="Goffeau A."/>
            <person name="Golightly E.J."/>
            <person name="Grandi G."/>
            <person name="Guiseppi G."/>
            <person name="Guy B.J."/>
            <person name="Haga K."/>
            <person name="Haiech J."/>
            <person name="Harwood C.R."/>
            <person name="Henaut A."/>
            <person name="Hilbert H."/>
            <person name="Holsappel S."/>
            <person name="Hosono S."/>
            <person name="Hullo M.-F."/>
            <person name="Itaya M."/>
            <person name="Jones L.-M."/>
            <person name="Joris B."/>
            <person name="Karamata D."/>
            <person name="Kasahara Y."/>
            <person name="Klaerr-Blanchard M."/>
            <person name="Klein C."/>
            <person name="Kobayashi Y."/>
            <person name="Koetter P."/>
            <person name="Koningstein G."/>
            <person name="Krogh S."/>
            <person name="Kumano M."/>
            <person name="Kurita K."/>
            <person name="Lapidus A."/>
            <person name="Lardinois S."/>
            <person name="Lauber J."/>
            <person name="Lazarevic V."/>
            <person name="Lee S.-M."/>
            <person name="Levine A."/>
            <person name="Liu H."/>
            <person name="Masuda S."/>
            <person name="Mauel C."/>
            <person name="Medigue C."/>
            <person name="Medina N."/>
            <person name="Mellado R.P."/>
            <person name="Mizuno M."/>
            <person name="Moestl D."/>
            <person name="Nakai S."/>
            <person name="Noback M."/>
            <person name="Noone D."/>
            <person name="O'Reilly M."/>
            <person name="Ogawa K."/>
            <person name="Ogiwara A."/>
            <person name="Oudega B."/>
            <person name="Park S.-H."/>
            <person name="Parro V."/>
            <person name="Pohl T.M."/>
            <person name="Portetelle D."/>
            <person name="Porwollik S."/>
            <person name="Prescott A.M."/>
            <person name="Presecan E."/>
            <person name="Pujic P."/>
            <person name="Purnelle B."/>
            <person name="Rapoport G."/>
            <person name="Rey M."/>
            <person name="Reynolds S."/>
            <person name="Rieger M."/>
            <person name="Rivolta C."/>
            <person name="Rocha E."/>
            <person name="Roche B."/>
            <person name="Rose M."/>
            <person name="Sadaie Y."/>
            <person name="Sato T."/>
            <person name="Scanlan E."/>
            <person name="Schleich S."/>
            <person name="Schroeter R."/>
            <person name="Scoffone F."/>
            <person name="Sekiguchi J."/>
            <person name="Sekowska A."/>
            <person name="Seror S.J."/>
            <person name="Serror P."/>
            <person name="Shin B.-S."/>
            <person name="Soldo B."/>
            <person name="Sorokin A."/>
            <person name="Tacconi E."/>
            <person name="Takagi T."/>
            <person name="Takahashi H."/>
            <person name="Takemaru K."/>
            <person name="Takeuchi M."/>
            <person name="Tamakoshi A."/>
            <person name="Tanaka T."/>
            <person name="Terpstra P."/>
            <person name="Tognoni A."/>
            <person name="Tosato V."/>
            <person name="Uchiyama S."/>
            <person name="Vandenbol M."/>
            <person name="Vannier F."/>
            <person name="Vassarotti A."/>
            <person name="Viari A."/>
            <person name="Wambutt R."/>
            <person name="Wedler E."/>
            <person name="Wedler H."/>
            <person name="Weitzenegger T."/>
            <person name="Winters P."/>
            <person name="Wipat A."/>
            <person name="Yamamoto H."/>
            <person name="Yamane K."/>
            <person name="Yasumoto K."/>
            <person name="Yata K."/>
            <person name="Yoshida K."/>
            <person name="Yoshikawa H.-F."/>
            <person name="Zumstein E."/>
            <person name="Yoshikawa H."/>
            <person name="Danchin A."/>
        </authorList>
    </citation>
    <scope>NUCLEOTIDE SEQUENCE [LARGE SCALE GENOMIC DNA]</scope>
    <source>
        <strain>168</strain>
    </source>
</reference>
<reference key="3">
    <citation type="journal article" date="2002" name="J. Bacteriol.">
        <title>Global expression profile of Bacillus subtilis grown in the presence of sulfate or methionine.</title>
        <authorList>
            <person name="Auger S."/>
            <person name="Danchin A."/>
            <person name="Martin-Verstraete I."/>
        </authorList>
    </citation>
    <scope>INDUCTION</scope>
    <source>
        <strain>168</strain>
    </source>
</reference>
<reference key="4">
    <citation type="journal article" date="2004" name="J. Bacteriol.">
        <title>Three different systems participate in L-cystine uptake in Bacillus subtilis.</title>
        <authorList>
            <person name="Burguiere P."/>
            <person name="Auger S."/>
            <person name="Hullo M.-F."/>
            <person name="Danchin A."/>
            <person name="Martin-Verstraete I."/>
        </authorList>
    </citation>
    <scope>PROBABLE FUNCTION IN S-METHYLCYSTEINE TRANSPORT</scope>
    <source>
        <strain>168</strain>
    </source>
</reference>
<sequence>MITVKNIRKAFKDLVVLDGIDLEVKRGEVVAIIGPSGSGKSTLLRCLNLLERPDQGLIEIGEAKLNAEKFTRKEAHRLRQQTAMVFQNYNLFKNKTALQNITEALIVAQHKPRDEAKRIGMEILKQVGLEHKADSYPITMSGGQQQRIGIARALAVNPHAILLDEPTSALDPELVTGVLQVIKSIAEKQTTMIIVTHEMAFAKEVADQVIFMADGHIIEQGTPEELFDHPKNERTKRFIKQVGEPAELI</sequence>
<gene>
    <name type="primary">yxeO</name>
    <name type="ordered locus">BSU39480</name>
    <name type="ORF">LP9G</name>
</gene>
<protein>
    <recommendedName>
        <fullName>Probable amino-acid import ATP-binding protein YxeO</fullName>
        <ecNumber>7.4.2.-</ecNumber>
    </recommendedName>
</protein>
<accession>P54954</accession>
<organism>
    <name type="scientific">Bacillus subtilis (strain 168)</name>
    <dbReference type="NCBI Taxonomy" id="224308"/>
    <lineage>
        <taxon>Bacteria</taxon>
        <taxon>Bacillati</taxon>
        <taxon>Bacillota</taxon>
        <taxon>Bacilli</taxon>
        <taxon>Bacillales</taxon>
        <taxon>Bacillaceae</taxon>
        <taxon>Bacillus</taxon>
    </lineage>
</organism>
<comment type="function">
    <text evidence="3">Probably part of the ABC transporter complex YxeMNO that could be involved in amino-acid import. May transport S-methylcysteine. Responsible for energy coupling to the transport system (Probable).</text>
</comment>
<comment type="subunit">
    <text evidence="3">The complex is composed of two ATP-binding proteins (YxeO), two transmembrane proteins (YxeN) and a solute-binding protein (YxeM).</text>
</comment>
<comment type="subcellular location">
    <subcellularLocation>
        <location evidence="3">Cell membrane</location>
        <topology evidence="3">Peripheral membrane protein</topology>
    </subcellularLocation>
</comment>
<comment type="induction">
    <text evidence="2">More strongly expressed in the presence of methionine than in the presence of sulfate.</text>
</comment>
<comment type="similarity">
    <text evidence="3">Belongs to the ABC transporter superfamily.</text>
</comment>
<proteinExistence type="evidence at protein level"/>
<evidence type="ECO:0000255" key="1">
    <source>
        <dbReference type="PROSITE-ProRule" id="PRU00434"/>
    </source>
</evidence>
<evidence type="ECO:0000269" key="2">
    <source>
    </source>
</evidence>
<evidence type="ECO:0000305" key="3"/>
<feature type="chain" id="PRO_0000093147" description="Probable amino-acid import ATP-binding protein YxeO">
    <location>
        <begin position="1"/>
        <end position="249"/>
    </location>
</feature>
<feature type="domain" description="ABC transporter" evidence="1">
    <location>
        <begin position="2"/>
        <end position="239"/>
    </location>
</feature>
<feature type="binding site" evidence="1">
    <location>
        <begin position="34"/>
        <end position="41"/>
    </location>
    <ligand>
        <name>ATP</name>
        <dbReference type="ChEBI" id="CHEBI:30616"/>
    </ligand>
</feature>
<name>YXEO_BACSU</name>
<dbReference type="EC" id="7.4.2.-"/>
<dbReference type="EMBL" id="D45912">
    <property type="protein sequence ID" value="BAA08331.1"/>
    <property type="molecule type" value="Genomic_DNA"/>
</dbReference>
<dbReference type="EMBL" id="AL009126">
    <property type="protein sequence ID" value="CAB15984.1"/>
    <property type="molecule type" value="Genomic_DNA"/>
</dbReference>
<dbReference type="PIR" id="A70076">
    <property type="entry name" value="A70076"/>
</dbReference>
<dbReference type="RefSeq" id="NP_391827.1">
    <property type="nucleotide sequence ID" value="NC_000964.3"/>
</dbReference>
<dbReference type="RefSeq" id="WP_003243284.1">
    <property type="nucleotide sequence ID" value="NZ_OZ025638.1"/>
</dbReference>
<dbReference type="SMR" id="P54954"/>
<dbReference type="FunCoup" id="P54954">
    <property type="interactions" value="316"/>
</dbReference>
<dbReference type="STRING" id="224308.BSU39480"/>
<dbReference type="PaxDb" id="224308-BSU39480"/>
<dbReference type="EnsemblBacteria" id="CAB15984">
    <property type="protein sequence ID" value="CAB15984"/>
    <property type="gene ID" value="BSU_39480"/>
</dbReference>
<dbReference type="GeneID" id="937555"/>
<dbReference type="KEGG" id="bsu:BSU39480"/>
<dbReference type="PATRIC" id="fig|224308.179.peg.4273"/>
<dbReference type="eggNOG" id="COG1126">
    <property type="taxonomic scope" value="Bacteria"/>
</dbReference>
<dbReference type="InParanoid" id="P54954"/>
<dbReference type="OrthoDB" id="9802185at2"/>
<dbReference type="PhylomeDB" id="P54954"/>
<dbReference type="BioCyc" id="BSUB:BSU39480-MONOMER"/>
<dbReference type="Proteomes" id="UP000001570">
    <property type="component" value="Chromosome"/>
</dbReference>
<dbReference type="GO" id="GO:0005886">
    <property type="term" value="C:plasma membrane"/>
    <property type="evidence" value="ECO:0007669"/>
    <property type="project" value="UniProtKB-SubCell"/>
</dbReference>
<dbReference type="GO" id="GO:0015424">
    <property type="term" value="F:ABC-type amino acid transporter activity"/>
    <property type="evidence" value="ECO:0007669"/>
    <property type="project" value="InterPro"/>
</dbReference>
<dbReference type="GO" id="GO:0005524">
    <property type="term" value="F:ATP binding"/>
    <property type="evidence" value="ECO:0007669"/>
    <property type="project" value="UniProtKB-KW"/>
</dbReference>
<dbReference type="GO" id="GO:0016887">
    <property type="term" value="F:ATP hydrolysis activity"/>
    <property type="evidence" value="ECO:0007669"/>
    <property type="project" value="InterPro"/>
</dbReference>
<dbReference type="CDD" id="cd03262">
    <property type="entry name" value="ABC_HisP_GlnQ"/>
    <property type="match status" value="1"/>
</dbReference>
<dbReference type="Gene3D" id="3.40.50.300">
    <property type="entry name" value="P-loop containing nucleotide triphosphate hydrolases"/>
    <property type="match status" value="1"/>
</dbReference>
<dbReference type="InterPro" id="IPR003593">
    <property type="entry name" value="AAA+_ATPase"/>
</dbReference>
<dbReference type="InterPro" id="IPR030679">
    <property type="entry name" value="ABC_ATPase_HisP-typ"/>
</dbReference>
<dbReference type="InterPro" id="IPR003439">
    <property type="entry name" value="ABC_transporter-like_ATP-bd"/>
</dbReference>
<dbReference type="InterPro" id="IPR017871">
    <property type="entry name" value="ABC_transporter-like_CS"/>
</dbReference>
<dbReference type="InterPro" id="IPR050086">
    <property type="entry name" value="MetN_ABC_transporter-like"/>
</dbReference>
<dbReference type="InterPro" id="IPR027417">
    <property type="entry name" value="P-loop_NTPase"/>
</dbReference>
<dbReference type="PANTHER" id="PTHR43166">
    <property type="entry name" value="AMINO ACID IMPORT ATP-BINDING PROTEIN"/>
    <property type="match status" value="1"/>
</dbReference>
<dbReference type="PANTHER" id="PTHR43166:SF35">
    <property type="entry name" value="L-CYSTINE IMPORT ATP-BINDING PROTEIN TCYN"/>
    <property type="match status" value="1"/>
</dbReference>
<dbReference type="Pfam" id="PF00005">
    <property type="entry name" value="ABC_tran"/>
    <property type="match status" value="1"/>
</dbReference>
<dbReference type="PIRSF" id="PIRSF039085">
    <property type="entry name" value="ABC_ATPase_HisP"/>
    <property type="match status" value="1"/>
</dbReference>
<dbReference type="SMART" id="SM00382">
    <property type="entry name" value="AAA"/>
    <property type="match status" value="1"/>
</dbReference>
<dbReference type="SUPFAM" id="SSF52540">
    <property type="entry name" value="P-loop containing nucleoside triphosphate hydrolases"/>
    <property type="match status" value="1"/>
</dbReference>
<dbReference type="PROSITE" id="PS00211">
    <property type="entry name" value="ABC_TRANSPORTER_1"/>
    <property type="match status" value="1"/>
</dbReference>
<dbReference type="PROSITE" id="PS50893">
    <property type="entry name" value="ABC_TRANSPORTER_2"/>
    <property type="match status" value="1"/>
</dbReference>
<keyword id="KW-0029">Amino-acid transport</keyword>
<keyword id="KW-0067">ATP-binding</keyword>
<keyword id="KW-1003">Cell membrane</keyword>
<keyword id="KW-0472">Membrane</keyword>
<keyword id="KW-0547">Nucleotide-binding</keyword>
<keyword id="KW-1185">Reference proteome</keyword>
<keyword id="KW-1278">Translocase</keyword>
<keyword id="KW-0813">Transport</keyword>